<reference key="1">
    <citation type="journal article" date="1995" name="Science">
        <title>The minimal gene complement of Mycoplasma genitalium.</title>
        <authorList>
            <person name="Fraser C.M."/>
            <person name="Gocayne J.D."/>
            <person name="White O."/>
            <person name="Adams M.D."/>
            <person name="Clayton R.A."/>
            <person name="Fleischmann R.D."/>
            <person name="Bult C.J."/>
            <person name="Kerlavage A.R."/>
            <person name="Sutton G.G."/>
            <person name="Kelley J.M."/>
            <person name="Fritchman J.L."/>
            <person name="Weidman J.F."/>
            <person name="Small K.V."/>
            <person name="Sandusky M."/>
            <person name="Fuhrmann J.L."/>
            <person name="Nguyen D.T."/>
            <person name="Utterback T.R."/>
            <person name="Saudek D.M."/>
            <person name="Phillips C.A."/>
            <person name="Merrick J.M."/>
            <person name="Tomb J.-F."/>
            <person name="Dougherty B.A."/>
            <person name="Bott K.F."/>
            <person name="Hu P.-C."/>
            <person name="Lucier T.S."/>
            <person name="Peterson S.N."/>
            <person name="Smith H.O."/>
            <person name="Hutchison C.A. III"/>
            <person name="Venter J.C."/>
        </authorList>
    </citation>
    <scope>NUCLEOTIDE SEQUENCE [LARGE SCALE GENOMIC DNA]</scope>
    <source>
        <strain>ATCC 33530 / DSM 19775 / NCTC 10195 / G37</strain>
    </source>
</reference>
<organism>
    <name type="scientific">Mycoplasma genitalium (strain ATCC 33530 / DSM 19775 / NCTC 10195 / G37)</name>
    <name type="common">Mycoplasmoides genitalium</name>
    <dbReference type="NCBI Taxonomy" id="243273"/>
    <lineage>
        <taxon>Bacteria</taxon>
        <taxon>Bacillati</taxon>
        <taxon>Mycoplasmatota</taxon>
        <taxon>Mycoplasmoidales</taxon>
        <taxon>Mycoplasmoidaceae</taxon>
        <taxon>Mycoplasmoides</taxon>
    </lineage>
</organism>
<evidence type="ECO:0000255" key="1">
    <source>
        <dbReference type="HAMAP-Rule" id="MF_01343"/>
    </source>
</evidence>
<evidence type="ECO:0000305" key="2"/>
<sequence length="86" mass="10185">MKIDKEQIIKAHQLHKNDVGSVQVQISILTDQIKKLTDHLLANKKDFISKRGLYTKVSKRKRLLKYLKERNIETYRDLIKNLNLRG</sequence>
<dbReference type="EMBL" id="L43967">
    <property type="protein sequence ID" value="AAC71648.1"/>
    <property type="molecule type" value="Genomic_DNA"/>
</dbReference>
<dbReference type="PIR" id="H64246">
    <property type="entry name" value="H64246"/>
</dbReference>
<dbReference type="RefSeq" id="WP_009885608.1">
    <property type="nucleotide sequence ID" value="NC_000908.2"/>
</dbReference>
<dbReference type="SMR" id="P47663"/>
<dbReference type="FunCoup" id="P47663">
    <property type="interactions" value="149"/>
</dbReference>
<dbReference type="STRING" id="243273.MG_424"/>
<dbReference type="GeneID" id="88282606"/>
<dbReference type="KEGG" id="mge:MG_424"/>
<dbReference type="eggNOG" id="COG0184">
    <property type="taxonomic scope" value="Bacteria"/>
</dbReference>
<dbReference type="HOGENOM" id="CLU_148518_1_0_14"/>
<dbReference type="InParanoid" id="P47663"/>
<dbReference type="OrthoDB" id="9799262at2"/>
<dbReference type="BioCyc" id="MGEN243273:G1GJ2-518-MONOMER"/>
<dbReference type="Proteomes" id="UP000000807">
    <property type="component" value="Chromosome"/>
</dbReference>
<dbReference type="GO" id="GO:0022627">
    <property type="term" value="C:cytosolic small ribosomal subunit"/>
    <property type="evidence" value="ECO:0000318"/>
    <property type="project" value="GO_Central"/>
</dbReference>
<dbReference type="GO" id="GO:0019843">
    <property type="term" value="F:rRNA binding"/>
    <property type="evidence" value="ECO:0007669"/>
    <property type="project" value="UniProtKB-UniRule"/>
</dbReference>
<dbReference type="GO" id="GO:0003735">
    <property type="term" value="F:structural constituent of ribosome"/>
    <property type="evidence" value="ECO:0007669"/>
    <property type="project" value="InterPro"/>
</dbReference>
<dbReference type="GO" id="GO:0006412">
    <property type="term" value="P:translation"/>
    <property type="evidence" value="ECO:0007669"/>
    <property type="project" value="UniProtKB-UniRule"/>
</dbReference>
<dbReference type="CDD" id="cd00353">
    <property type="entry name" value="Ribosomal_S15p_S13e"/>
    <property type="match status" value="1"/>
</dbReference>
<dbReference type="Gene3D" id="6.10.250.3130">
    <property type="match status" value="1"/>
</dbReference>
<dbReference type="Gene3D" id="1.10.287.10">
    <property type="entry name" value="S15/NS1, RNA-binding"/>
    <property type="match status" value="1"/>
</dbReference>
<dbReference type="HAMAP" id="MF_01343_B">
    <property type="entry name" value="Ribosomal_uS15_B"/>
    <property type="match status" value="1"/>
</dbReference>
<dbReference type="InterPro" id="IPR000589">
    <property type="entry name" value="Ribosomal_uS15"/>
</dbReference>
<dbReference type="InterPro" id="IPR005290">
    <property type="entry name" value="Ribosomal_uS15_bac-type"/>
</dbReference>
<dbReference type="InterPro" id="IPR009068">
    <property type="entry name" value="uS15_NS1_RNA-bd_sf"/>
</dbReference>
<dbReference type="NCBIfam" id="TIGR00952">
    <property type="entry name" value="S15_bact"/>
    <property type="match status" value="1"/>
</dbReference>
<dbReference type="PANTHER" id="PTHR23321">
    <property type="entry name" value="RIBOSOMAL PROTEIN S15, BACTERIAL AND ORGANELLAR"/>
    <property type="match status" value="1"/>
</dbReference>
<dbReference type="PANTHER" id="PTHR23321:SF26">
    <property type="entry name" value="SMALL RIBOSOMAL SUBUNIT PROTEIN US15M"/>
    <property type="match status" value="1"/>
</dbReference>
<dbReference type="Pfam" id="PF00312">
    <property type="entry name" value="Ribosomal_S15"/>
    <property type="match status" value="1"/>
</dbReference>
<dbReference type="SMART" id="SM01387">
    <property type="entry name" value="Ribosomal_S15"/>
    <property type="match status" value="1"/>
</dbReference>
<dbReference type="SUPFAM" id="SSF47060">
    <property type="entry name" value="S15/NS1 RNA-binding domain"/>
    <property type="match status" value="1"/>
</dbReference>
<dbReference type="PROSITE" id="PS00362">
    <property type="entry name" value="RIBOSOMAL_S15"/>
    <property type="match status" value="1"/>
</dbReference>
<comment type="function">
    <text evidence="1">One of the primary rRNA binding proteins, it binds directly to 16S rRNA where it helps nucleate assembly of the platform of the 30S subunit by binding and bridging several RNA helices of the 16S rRNA.</text>
</comment>
<comment type="function">
    <text evidence="1">Forms an intersubunit bridge (bridge B4) with the 23S rRNA of the 50S subunit in the ribosome.</text>
</comment>
<comment type="subunit">
    <text evidence="1">Part of the 30S ribosomal subunit. Forms a bridge to the 50S subunit in the 70S ribosome, contacting the 23S rRNA.</text>
</comment>
<comment type="similarity">
    <text evidence="1">Belongs to the universal ribosomal protein uS15 family.</text>
</comment>
<name>RS15_MYCGE</name>
<feature type="chain" id="PRO_0000115476" description="Small ribosomal subunit protein uS15">
    <location>
        <begin position="1"/>
        <end position="86"/>
    </location>
</feature>
<gene>
    <name evidence="1" type="primary">rpsO</name>
    <name evidence="1" type="synonym">rps15</name>
    <name type="ordered locus">MG424</name>
</gene>
<protein>
    <recommendedName>
        <fullName evidence="1">Small ribosomal subunit protein uS15</fullName>
    </recommendedName>
    <alternativeName>
        <fullName evidence="2">30S ribosomal protein S15</fullName>
    </alternativeName>
</protein>
<accession>P47663</accession>
<proteinExistence type="inferred from homology"/>
<keyword id="KW-1185">Reference proteome</keyword>
<keyword id="KW-0687">Ribonucleoprotein</keyword>
<keyword id="KW-0689">Ribosomal protein</keyword>
<keyword id="KW-0694">RNA-binding</keyword>
<keyword id="KW-0699">rRNA-binding</keyword>